<gene>
    <name type="primary">87</name>
</gene>
<reference key="1">
    <citation type="journal article" date="1998" name="J. Mol. Biol.">
        <title>Genome structure of mycobacteriophage D29: implications for phage evolution.</title>
        <authorList>
            <person name="Ford M.E."/>
            <person name="Sarkis G.J."/>
            <person name="Belanger A.E."/>
            <person name="Hendrix R.W."/>
            <person name="Hatfull G.F."/>
        </authorList>
    </citation>
    <scope>NUCLEOTIDE SEQUENCE [LARGE SCALE GENOMIC DNA]</scope>
</reference>
<feature type="chain" id="PRO_0000164832" description="Gene 87 protein">
    <location>
        <begin position="1"/>
        <end position="54"/>
    </location>
</feature>
<organismHost>
    <name type="scientific">Mycobacterium</name>
    <dbReference type="NCBI Taxonomy" id="1763"/>
</organismHost>
<sequence length="54" mass="6210">MSFHLWMANLDAYMQETFGVGRRDIADWTYHDAYDDGLTFREAAHQAIANELGS</sequence>
<protein>
    <recommendedName>
        <fullName>Gene 87 protein</fullName>
    </recommendedName>
    <alternativeName>
        <fullName>Gp87</fullName>
    </alternativeName>
</protein>
<accession>O64268</accession>
<keyword id="KW-1185">Reference proteome</keyword>
<organism>
    <name type="scientific">Mycobacterium phage D29</name>
    <name type="common">Mycobacteriophage D29</name>
    <dbReference type="NCBI Taxonomy" id="28369"/>
    <lineage>
        <taxon>Viruses</taxon>
        <taxon>Duplodnaviria</taxon>
        <taxon>Heunggongvirae</taxon>
        <taxon>Uroviricota</taxon>
        <taxon>Caudoviricetes</taxon>
        <taxon>Fromanvirus</taxon>
    </lineage>
</organism>
<dbReference type="EMBL" id="AF022214">
    <property type="protein sequence ID" value="AAC18517.1"/>
    <property type="molecule type" value="Genomic_DNA"/>
</dbReference>
<dbReference type="PIR" id="C72809">
    <property type="entry name" value="C72809"/>
</dbReference>
<dbReference type="RefSeq" id="NP_046893.1">
    <property type="nucleotide sequence ID" value="NC_001900.1"/>
</dbReference>
<dbReference type="SMR" id="O64268"/>
<dbReference type="GeneID" id="1261575"/>
<dbReference type="KEGG" id="vg:1261575"/>
<dbReference type="OrthoDB" id="25019at10239"/>
<dbReference type="Proteomes" id="UP000002131">
    <property type="component" value="Segment"/>
</dbReference>
<dbReference type="InterPro" id="IPR039451">
    <property type="entry name" value="DUF5419"/>
</dbReference>
<dbReference type="Pfam" id="PF17441">
    <property type="entry name" value="DUF5419"/>
    <property type="match status" value="1"/>
</dbReference>
<name>VG87_BPMD2</name>
<proteinExistence type="predicted"/>